<feature type="chain" id="PRO_0000182269" description="Transcriptional repressor NrdR">
    <location>
        <begin position="1"/>
        <end position="194"/>
    </location>
</feature>
<feature type="domain" description="ATP-cone" evidence="1">
    <location>
        <begin position="48"/>
        <end position="138"/>
    </location>
</feature>
<feature type="zinc finger region" evidence="1">
    <location>
        <begin position="3"/>
        <end position="33"/>
    </location>
</feature>
<feature type="region of interest" description="Disordered" evidence="2">
    <location>
        <begin position="168"/>
        <end position="194"/>
    </location>
</feature>
<feature type="compositionally biased region" description="Basic and acidic residues" evidence="2">
    <location>
        <begin position="168"/>
        <end position="179"/>
    </location>
</feature>
<feature type="compositionally biased region" description="Pro residues" evidence="2">
    <location>
        <begin position="185"/>
        <end position="194"/>
    </location>
</feature>
<organism>
    <name type="scientific">Bdellovibrio bacteriovorus (strain ATCC 15356 / DSM 50701 / NCIMB 9529 / HD100)</name>
    <dbReference type="NCBI Taxonomy" id="264462"/>
    <lineage>
        <taxon>Bacteria</taxon>
        <taxon>Pseudomonadati</taxon>
        <taxon>Bdellovibrionota</taxon>
        <taxon>Bdellovibrionia</taxon>
        <taxon>Bdellovibrionales</taxon>
        <taxon>Pseudobdellovibrionaceae</taxon>
        <taxon>Bdellovibrio</taxon>
    </lineage>
</organism>
<gene>
    <name evidence="1" type="primary">nrdR</name>
    <name type="ordered locus">Bd1098</name>
</gene>
<protein>
    <recommendedName>
        <fullName evidence="1">Transcriptional repressor NrdR</fullName>
    </recommendedName>
</protein>
<name>NRDR_BDEBA</name>
<accession>Q6MNX8</accession>
<reference key="1">
    <citation type="journal article" date="2004" name="Science">
        <title>A predator unmasked: life cycle of Bdellovibrio bacteriovorus from a genomic perspective.</title>
        <authorList>
            <person name="Rendulic S."/>
            <person name="Jagtap P."/>
            <person name="Rosinus A."/>
            <person name="Eppinger M."/>
            <person name="Baar C."/>
            <person name="Lanz C."/>
            <person name="Keller H."/>
            <person name="Lambert C."/>
            <person name="Evans K.J."/>
            <person name="Goesmann A."/>
            <person name="Meyer F."/>
            <person name="Sockett R.E."/>
            <person name="Schuster S.C."/>
        </authorList>
    </citation>
    <scope>NUCLEOTIDE SEQUENCE [LARGE SCALE GENOMIC DNA]</scope>
    <source>
        <strain>ATCC 15356 / DSM 50701 / NCIMB 9529 / HD100</strain>
    </source>
</reference>
<sequence>MKCPFCGHADDRVLDTRVQKDGSIRRRRECLECKARFSTVETIMLAFPFIIKKDGRREPFSKEKILKGLQASCQKRPVSLAQIDAVVEKISAWVINRGESEISSRLIGKKVMAELKQLDDVAYIRFASVYRTFKDVQEFVETLEDAELLDFVDASNPQLSLTAMTFVESEKSTNHETDSKTPSPRTRPPGPLSN</sequence>
<dbReference type="EMBL" id="BX842648">
    <property type="protein sequence ID" value="CAE79021.1"/>
    <property type="status" value="ALT_INIT"/>
    <property type="molecule type" value="Genomic_DNA"/>
</dbReference>
<dbReference type="RefSeq" id="WP_011163623.1">
    <property type="nucleotide sequence ID" value="NC_005363.1"/>
</dbReference>
<dbReference type="SMR" id="Q6MNX8"/>
<dbReference type="STRING" id="264462.Bd1098"/>
<dbReference type="GeneID" id="93012151"/>
<dbReference type="KEGG" id="bba:Bd1098"/>
<dbReference type="eggNOG" id="COG1327">
    <property type="taxonomic scope" value="Bacteria"/>
</dbReference>
<dbReference type="HOGENOM" id="CLU_108412_0_1_7"/>
<dbReference type="Proteomes" id="UP000008080">
    <property type="component" value="Chromosome"/>
</dbReference>
<dbReference type="GO" id="GO:0005524">
    <property type="term" value="F:ATP binding"/>
    <property type="evidence" value="ECO:0007669"/>
    <property type="project" value="UniProtKB-KW"/>
</dbReference>
<dbReference type="GO" id="GO:0003677">
    <property type="term" value="F:DNA binding"/>
    <property type="evidence" value="ECO:0007669"/>
    <property type="project" value="UniProtKB-KW"/>
</dbReference>
<dbReference type="GO" id="GO:0008270">
    <property type="term" value="F:zinc ion binding"/>
    <property type="evidence" value="ECO:0007669"/>
    <property type="project" value="UniProtKB-KW"/>
</dbReference>
<dbReference type="GO" id="GO:0045892">
    <property type="term" value="P:negative regulation of DNA-templated transcription"/>
    <property type="evidence" value="ECO:0007669"/>
    <property type="project" value="UniProtKB-UniRule"/>
</dbReference>
<dbReference type="HAMAP" id="MF_00440">
    <property type="entry name" value="NrdR"/>
    <property type="match status" value="1"/>
</dbReference>
<dbReference type="InterPro" id="IPR005144">
    <property type="entry name" value="ATP-cone_dom"/>
</dbReference>
<dbReference type="InterPro" id="IPR055173">
    <property type="entry name" value="NrdR-like_N"/>
</dbReference>
<dbReference type="InterPro" id="IPR003796">
    <property type="entry name" value="RNR_NrdR-like"/>
</dbReference>
<dbReference type="NCBIfam" id="TIGR00244">
    <property type="entry name" value="transcriptional regulator NrdR"/>
    <property type="match status" value="1"/>
</dbReference>
<dbReference type="PANTHER" id="PTHR30455">
    <property type="entry name" value="TRANSCRIPTIONAL REPRESSOR NRDR"/>
    <property type="match status" value="1"/>
</dbReference>
<dbReference type="PANTHER" id="PTHR30455:SF2">
    <property type="entry name" value="TRANSCRIPTIONAL REPRESSOR NRDR"/>
    <property type="match status" value="1"/>
</dbReference>
<dbReference type="Pfam" id="PF03477">
    <property type="entry name" value="ATP-cone"/>
    <property type="match status" value="1"/>
</dbReference>
<dbReference type="Pfam" id="PF22811">
    <property type="entry name" value="Zn_ribbon_NrdR"/>
    <property type="match status" value="1"/>
</dbReference>
<dbReference type="PROSITE" id="PS51161">
    <property type="entry name" value="ATP_CONE"/>
    <property type="match status" value="1"/>
</dbReference>
<comment type="function">
    <text evidence="1">Negatively regulates transcription of bacterial ribonucleotide reductase nrd genes and operons by binding to NrdR-boxes.</text>
</comment>
<comment type="cofactor">
    <cofactor evidence="1">
        <name>Zn(2+)</name>
        <dbReference type="ChEBI" id="CHEBI:29105"/>
    </cofactor>
    <text evidence="1">Binds 1 zinc ion.</text>
</comment>
<comment type="similarity">
    <text evidence="1">Belongs to the NrdR family.</text>
</comment>
<comment type="sequence caution" evidence="3">
    <conflict type="erroneous initiation">
        <sequence resource="EMBL-CDS" id="CAE79021"/>
    </conflict>
</comment>
<evidence type="ECO:0000255" key="1">
    <source>
        <dbReference type="HAMAP-Rule" id="MF_00440"/>
    </source>
</evidence>
<evidence type="ECO:0000256" key="2">
    <source>
        <dbReference type="SAM" id="MobiDB-lite"/>
    </source>
</evidence>
<evidence type="ECO:0000305" key="3"/>
<proteinExistence type="inferred from homology"/>
<keyword id="KW-0067">ATP-binding</keyword>
<keyword id="KW-0238">DNA-binding</keyword>
<keyword id="KW-0479">Metal-binding</keyword>
<keyword id="KW-0547">Nucleotide-binding</keyword>
<keyword id="KW-1185">Reference proteome</keyword>
<keyword id="KW-0678">Repressor</keyword>
<keyword id="KW-0804">Transcription</keyword>
<keyword id="KW-0805">Transcription regulation</keyword>
<keyword id="KW-0862">Zinc</keyword>
<keyword id="KW-0863">Zinc-finger</keyword>